<sequence>GLLPAAAPAVAYSAAPAVSHVSYSSPVVSYGAPLAAPAITSQSSNILRSFGNLGQVSTYSKTIDTPFSSVRKADIRVSNPGVRFAAAAPVAAYAAPIATAAYAAPVAHAAYAAPVAHAAYAAPVAHAAYAAPVARTIGVAYSAAPAVSHVTYTGLGASYGW</sequence>
<dbReference type="GO" id="GO:0042302">
    <property type="term" value="F:structural constituent of cuticle"/>
    <property type="evidence" value="ECO:0007669"/>
    <property type="project" value="UniProtKB-KW"/>
</dbReference>
<dbReference type="InterPro" id="IPR022727">
    <property type="entry name" value="Cuticle_C1"/>
</dbReference>
<dbReference type="PANTHER" id="PTHR39068">
    <property type="entry name" value="LARVAL/PUPAL CUTICLE PROTEIN H1C-LIKE PROTEIN-RELATED"/>
    <property type="match status" value="1"/>
</dbReference>
<dbReference type="PANTHER" id="PTHR39068:SF5">
    <property type="entry name" value="PUPAL CUTICLE PROTEIN C1B-LIKE PROTEIN"/>
    <property type="match status" value="1"/>
</dbReference>
<dbReference type="Pfam" id="PF11018">
    <property type="entry name" value="Cuticle_3"/>
    <property type="match status" value="1"/>
</dbReference>
<organism>
    <name type="scientific">Tenebrio molitor</name>
    <name type="common">Yellow mealworm beetle</name>
    <dbReference type="NCBI Taxonomy" id="7067"/>
    <lineage>
        <taxon>Eukaryota</taxon>
        <taxon>Metazoa</taxon>
        <taxon>Ecdysozoa</taxon>
        <taxon>Arthropoda</taxon>
        <taxon>Hexapoda</taxon>
        <taxon>Insecta</taxon>
        <taxon>Pterygota</taxon>
        <taxon>Neoptera</taxon>
        <taxon>Endopterygota</taxon>
        <taxon>Coleoptera</taxon>
        <taxon>Polyphaga</taxon>
        <taxon>Cucujiformia</taxon>
        <taxon>Tenebrionidae</taxon>
        <taxon>Tenebrio</taxon>
    </lineage>
</organism>
<evidence type="ECO:0000269" key="1">
    <source>
    </source>
</evidence>
<feature type="chain" id="PRO_0000196136" description="Pupal cuticle protein C1B">
    <location>
        <begin position="1"/>
        <end position="161"/>
    </location>
</feature>
<feature type="repeat" description="1">
    <location>
        <begin position="6"/>
        <end position="9"/>
    </location>
</feature>
<feature type="repeat" description="2">
    <location>
        <begin position="14"/>
        <end position="17"/>
    </location>
</feature>
<feature type="repeat" description="3">
    <location>
        <begin position="35"/>
        <end position="38"/>
    </location>
</feature>
<feature type="repeat" description="4">
    <location>
        <begin position="87"/>
        <end position="90"/>
    </location>
</feature>
<feature type="repeat" description="5">
    <location>
        <begin position="103"/>
        <end position="106"/>
    </location>
</feature>
<feature type="repeat" description="6">
    <location>
        <begin position="112"/>
        <end position="115"/>
    </location>
</feature>
<feature type="repeat" description="7">
    <location>
        <begin position="121"/>
        <end position="124"/>
    </location>
</feature>
<feature type="repeat" description="8">
    <location>
        <begin position="130"/>
        <end position="133"/>
    </location>
</feature>
<feature type="repeat" description="9">
    <location>
        <begin position="143"/>
        <end position="146"/>
    </location>
</feature>
<comment type="function">
    <text>Component of the cuticle of the pupa of Tenebrio molitor.</text>
</comment>
<comment type="domain">
    <text>The tetrapeptide (A-A-P-[AV]) repeats found throughout the protein are also present in many proteins constituting the protective envelope of other species.</text>
</comment>
<comment type="mass spectrometry"/>
<keyword id="KW-0193">Cuticle</keyword>
<keyword id="KW-0903">Direct protein sequencing</keyword>
<keyword id="KW-0677">Repeat</keyword>
<name>CUC1B_TENMO</name>
<accession>P80684</accession>
<reference key="1">
    <citation type="journal article" date="1997" name="Insect Biochem. Mol. Biol.">
        <title>Sequence studies of proteins from larval and pupal cuticle of the yellow meal worm, Tenebrio molitor.</title>
        <authorList>
            <person name="Andersen S.O."/>
            <person name="Rafn K."/>
            <person name="Roepstorff P."/>
        </authorList>
    </citation>
    <scope>PROTEIN SEQUENCE</scope>
    <scope>MASS SPECTROMETRY</scope>
    <source>
        <tissue>Cuticle</tissue>
    </source>
</reference>
<protein>
    <recommendedName>
        <fullName>Pupal cuticle protein C1B</fullName>
    </recommendedName>
    <alternativeName>
        <fullName>TM-PCP C1B</fullName>
        <shortName>TM-C1B</shortName>
    </alternativeName>
</protein>
<proteinExistence type="evidence at protein level"/>